<sequence length="473" mass="51623">MSKGQVIQVMGPVVDVKFEGGNLPEIYNALVIEYKSDAEEAPTSQLTLEVAIQLGDDVVRTIAMASTDGVQRGMEVIDTGSPITVPVGTVTLGRVFNVLGNTIDLDEPLPSDIKRNKIHREAPTFDQLATTTEILETGIKVVDLLAPYLKGGKIGLFGGAGVGKTVLIQELIHNIAQEHGGISVFAGVGERTREGNDLYFEMKDSGVIEKTAMVFGQMNEPPGARMRVALTGLTIAEYFRDEEHQDVLLFIDNIFRFTQAGSEVSALLGRMPSAVGYQPTLATEMGQLQERITSTNVGSVTSIQAIYVPADDYTDPAPATTFAHLDATTNLERKLTEQGIYPAVDPLASTSRALSPDIVGEEHYAVATEVQRLLQRYKELQDIIAILGMDELSDEDKQSVSRARRVQFFLSQNFHVAEQFTGQKGSYVPVKETVKGFKDLLAGKYDHIPEDAFRSVGRIEEVLEKAKDMGVEV</sequence>
<keyword id="KW-0066">ATP synthesis</keyword>
<keyword id="KW-0067">ATP-binding</keyword>
<keyword id="KW-1003">Cell membrane</keyword>
<keyword id="KW-0139">CF(1)</keyword>
<keyword id="KW-0375">Hydrogen ion transport</keyword>
<keyword id="KW-0406">Ion transport</keyword>
<keyword id="KW-0472">Membrane</keyword>
<keyword id="KW-0547">Nucleotide-binding</keyword>
<keyword id="KW-1278">Translocase</keyword>
<keyword id="KW-0813">Transport</keyword>
<reference key="1">
    <citation type="journal article" date="2006" name="J. Bacteriol.">
        <title>Whole-genome sequence of Listeria welshimeri reveals common steps in genome reduction with Listeria innocua as compared to Listeria monocytogenes.</title>
        <authorList>
            <person name="Hain T."/>
            <person name="Steinweg C."/>
            <person name="Kuenne C.T."/>
            <person name="Billion A."/>
            <person name="Ghai R."/>
            <person name="Chatterjee S.S."/>
            <person name="Domann E."/>
            <person name="Kaerst U."/>
            <person name="Goesmann A."/>
            <person name="Bekel T."/>
            <person name="Bartels D."/>
            <person name="Kaiser O."/>
            <person name="Meyer F."/>
            <person name="Puehler A."/>
            <person name="Weisshaar B."/>
            <person name="Wehland J."/>
            <person name="Liang C."/>
            <person name="Dandekar T."/>
            <person name="Lampidis R."/>
            <person name="Kreft J."/>
            <person name="Goebel W."/>
            <person name="Chakraborty T."/>
        </authorList>
    </citation>
    <scope>NUCLEOTIDE SEQUENCE [LARGE SCALE GENOMIC DNA]</scope>
    <source>
        <strain>ATCC 35897 / DSM 20650 / CCUG 15529 / CIP 8149 / NCTC 11857 / SLCC 5334 / V8</strain>
    </source>
</reference>
<feature type="chain" id="PRO_0000339541" description="ATP synthase subunit beta 2">
    <location>
        <begin position="1"/>
        <end position="473"/>
    </location>
</feature>
<feature type="binding site" evidence="1">
    <location>
        <begin position="158"/>
        <end position="165"/>
    </location>
    <ligand>
        <name>ATP</name>
        <dbReference type="ChEBI" id="CHEBI:30616"/>
    </ligand>
</feature>
<comment type="function">
    <text evidence="1">Produces ATP from ADP in the presence of a proton gradient across the membrane. The catalytic sites are hosted primarily by the beta subunits.</text>
</comment>
<comment type="catalytic activity">
    <reaction evidence="1">
        <text>ATP + H2O + 4 H(+)(in) = ADP + phosphate + 5 H(+)(out)</text>
        <dbReference type="Rhea" id="RHEA:57720"/>
        <dbReference type="ChEBI" id="CHEBI:15377"/>
        <dbReference type="ChEBI" id="CHEBI:15378"/>
        <dbReference type="ChEBI" id="CHEBI:30616"/>
        <dbReference type="ChEBI" id="CHEBI:43474"/>
        <dbReference type="ChEBI" id="CHEBI:456216"/>
        <dbReference type="EC" id="7.1.2.2"/>
    </reaction>
</comment>
<comment type="subunit">
    <text evidence="1">F-type ATPases have 2 components, CF(1) - the catalytic core - and CF(0) - the membrane proton channel. CF(1) has five subunits: alpha(3), beta(3), gamma(1), delta(1), epsilon(1). CF(0) has three main subunits: a(1), b(2) and c(9-12). The alpha and beta chains form an alternating ring which encloses part of the gamma chain. CF(1) is attached to CF(0) by a central stalk formed by the gamma and epsilon chains, while a peripheral stalk is formed by the delta and b chains.</text>
</comment>
<comment type="subcellular location">
    <subcellularLocation>
        <location evidence="1">Cell membrane</location>
        <topology evidence="1">Peripheral membrane protein</topology>
    </subcellularLocation>
</comment>
<comment type="similarity">
    <text evidence="1">Belongs to the ATPase alpha/beta chains family.</text>
</comment>
<proteinExistence type="inferred from homology"/>
<gene>
    <name evidence="1" type="primary">atpD2</name>
    <name type="ordered locus">lwe2477</name>
</gene>
<dbReference type="EC" id="7.1.2.2" evidence="1"/>
<dbReference type="EMBL" id="AM263198">
    <property type="protein sequence ID" value="CAK21895.1"/>
    <property type="molecule type" value="Genomic_DNA"/>
</dbReference>
<dbReference type="SMR" id="A0ALL3"/>
<dbReference type="STRING" id="386043.lwe2477"/>
<dbReference type="KEGG" id="lwe:lwe2477"/>
<dbReference type="eggNOG" id="COG0055">
    <property type="taxonomic scope" value="Bacteria"/>
</dbReference>
<dbReference type="HOGENOM" id="CLU_022398_0_2_9"/>
<dbReference type="OrthoDB" id="9801639at2"/>
<dbReference type="Proteomes" id="UP000000779">
    <property type="component" value="Chromosome"/>
</dbReference>
<dbReference type="GO" id="GO:0005886">
    <property type="term" value="C:plasma membrane"/>
    <property type="evidence" value="ECO:0007669"/>
    <property type="project" value="UniProtKB-SubCell"/>
</dbReference>
<dbReference type="GO" id="GO:0045259">
    <property type="term" value="C:proton-transporting ATP synthase complex"/>
    <property type="evidence" value="ECO:0007669"/>
    <property type="project" value="UniProtKB-KW"/>
</dbReference>
<dbReference type="GO" id="GO:0005524">
    <property type="term" value="F:ATP binding"/>
    <property type="evidence" value="ECO:0007669"/>
    <property type="project" value="UniProtKB-UniRule"/>
</dbReference>
<dbReference type="GO" id="GO:0016887">
    <property type="term" value="F:ATP hydrolysis activity"/>
    <property type="evidence" value="ECO:0007669"/>
    <property type="project" value="InterPro"/>
</dbReference>
<dbReference type="GO" id="GO:0046933">
    <property type="term" value="F:proton-transporting ATP synthase activity, rotational mechanism"/>
    <property type="evidence" value="ECO:0007669"/>
    <property type="project" value="UniProtKB-UniRule"/>
</dbReference>
<dbReference type="CDD" id="cd18110">
    <property type="entry name" value="ATP-synt_F1_beta_C"/>
    <property type="match status" value="1"/>
</dbReference>
<dbReference type="CDD" id="cd18115">
    <property type="entry name" value="ATP-synt_F1_beta_N"/>
    <property type="match status" value="1"/>
</dbReference>
<dbReference type="CDD" id="cd01133">
    <property type="entry name" value="F1-ATPase_beta_CD"/>
    <property type="match status" value="1"/>
</dbReference>
<dbReference type="FunFam" id="1.10.1140.10:FF:000001">
    <property type="entry name" value="ATP synthase subunit beta"/>
    <property type="match status" value="1"/>
</dbReference>
<dbReference type="FunFam" id="2.40.10.170:FF:000005">
    <property type="entry name" value="ATP synthase subunit beta"/>
    <property type="match status" value="1"/>
</dbReference>
<dbReference type="FunFam" id="3.40.50.300:FF:000004">
    <property type="entry name" value="ATP synthase subunit beta"/>
    <property type="match status" value="1"/>
</dbReference>
<dbReference type="Gene3D" id="2.40.10.170">
    <property type="match status" value="1"/>
</dbReference>
<dbReference type="Gene3D" id="1.10.1140.10">
    <property type="entry name" value="Bovine Mitochondrial F1-atpase, Atp Synthase Beta Chain, Chain D, domain 3"/>
    <property type="match status" value="1"/>
</dbReference>
<dbReference type="Gene3D" id="3.40.50.300">
    <property type="entry name" value="P-loop containing nucleotide triphosphate hydrolases"/>
    <property type="match status" value="1"/>
</dbReference>
<dbReference type="HAMAP" id="MF_01347">
    <property type="entry name" value="ATP_synth_beta_bact"/>
    <property type="match status" value="1"/>
</dbReference>
<dbReference type="InterPro" id="IPR003593">
    <property type="entry name" value="AAA+_ATPase"/>
</dbReference>
<dbReference type="InterPro" id="IPR055190">
    <property type="entry name" value="ATP-synt_VA_C"/>
</dbReference>
<dbReference type="InterPro" id="IPR005722">
    <property type="entry name" value="ATP_synth_F1_bsu"/>
</dbReference>
<dbReference type="InterPro" id="IPR020003">
    <property type="entry name" value="ATPase_a/bsu_AS"/>
</dbReference>
<dbReference type="InterPro" id="IPR050053">
    <property type="entry name" value="ATPase_alpha/beta_chains"/>
</dbReference>
<dbReference type="InterPro" id="IPR004100">
    <property type="entry name" value="ATPase_F1/V1/A1_a/bsu_N"/>
</dbReference>
<dbReference type="InterPro" id="IPR036121">
    <property type="entry name" value="ATPase_F1/V1/A1_a/bsu_N_sf"/>
</dbReference>
<dbReference type="InterPro" id="IPR000194">
    <property type="entry name" value="ATPase_F1/V1/A1_a/bsu_nucl-bd"/>
</dbReference>
<dbReference type="InterPro" id="IPR024034">
    <property type="entry name" value="ATPase_F1/V1_b/a_C"/>
</dbReference>
<dbReference type="InterPro" id="IPR027417">
    <property type="entry name" value="P-loop_NTPase"/>
</dbReference>
<dbReference type="NCBIfam" id="TIGR01039">
    <property type="entry name" value="atpD"/>
    <property type="match status" value="1"/>
</dbReference>
<dbReference type="PANTHER" id="PTHR15184">
    <property type="entry name" value="ATP SYNTHASE"/>
    <property type="match status" value="1"/>
</dbReference>
<dbReference type="PANTHER" id="PTHR15184:SF71">
    <property type="entry name" value="ATP SYNTHASE SUBUNIT BETA, MITOCHONDRIAL"/>
    <property type="match status" value="1"/>
</dbReference>
<dbReference type="Pfam" id="PF00006">
    <property type="entry name" value="ATP-synt_ab"/>
    <property type="match status" value="1"/>
</dbReference>
<dbReference type="Pfam" id="PF02874">
    <property type="entry name" value="ATP-synt_ab_N"/>
    <property type="match status" value="1"/>
</dbReference>
<dbReference type="Pfam" id="PF22919">
    <property type="entry name" value="ATP-synt_VA_C"/>
    <property type="match status" value="1"/>
</dbReference>
<dbReference type="SMART" id="SM00382">
    <property type="entry name" value="AAA"/>
    <property type="match status" value="1"/>
</dbReference>
<dbReference type="SUPFAM" id="SSF47917">
    <property type="entry name" value="C-terminal domain of alpha and beta subunits of F1 ATP synthase"/>
    <property type="match status" value="1"/>
</dbReference>
<dbReference type="SUPFAM" id="SSF50615">
    <property type="entry name" value="N-terminal domain of alpha and beta subunits of F1 ATP synthase"/>
    <property type="match status" value="1"/>
</dbReference>
<dbReference type="SUPFAM" id="SSF52540">
    <property type="entry name" value="P-loop containing nucleoside triphosphate hydrolases"/>
    <property type="match status" value="1"/>
</dbReference>
<dbReference type="PROSITE" id="PS00152">
    <property type="entry name" value="ATPASE_ALPHA_BETA"/>
    <property type="match status" value="1"/>
</dbReference>
<name>ATPB2_LISW6</name>
<organism>
    <name type="scientific">Listeria welshimeri serovar 6b (strain ATCC 35897 / DSM 20650 / CCUG 15529 / CIP 8149 / NCTC 11857 / SLCC 5334 / V8)</name>
    <dbReference type="NCBI Taxonomy" id="386043"/>
    <lineage>
        <taxon>Bacteria</taxon>
        <taxon>Bacillati</taxon>
        <taxon>Bacillota</taxon>
        <taxon>Bacilli</taxon>
        <taxon>Bacillales</taxon>
        <taxon>Listeriaceae</taxon>
        <taxon>Listeria</taxon>
    </lineage>
</organism>
<evidence type="ECO:0000255" key="1">
    <source>
        <dbReference type="HAMAP-Rule" id="MF_01347"/>
    </source>
</evidence>
<accession>A0ALL3</accession>
<protein>
    <recommendedName>
        <fullName evidence="1">ATP synthase subunit beta 2</fullName>
        <ecNumber evidence="1">7.1.2.2</ecNumber>
    </recommendedName>
    <alternativeName>
        <fullName evidence="1">ATP synthase F1 sector subunit beta 2</fullName>
    </alternativeName>
    <alternativeName>
        <fullName evidence="1">F-ATPase subunit beta 2</fullName>
    </alternativeName>
</protein>